<accession>Q74C82</accession>
<dbReference type="EC" id="3.4.21.92" evidence="1"/>
<dbReference type="EMBL" id="AE017180">
    <property type="protein sequence ID" value="AAR35169.1"/>
    <property type="molecule type" value="Genomic_DNA"/>
</dbReference>
<dbReference type="RefSeq" id="NP_952842.1">
    <property type="nucleotide sequence ID" value="NC_002939.5"/>
</dbReference>
<dbReference type="RefSeq" id="WP_010942436.1">
    <property type="nucleotide sequence ID" value="NC_002939.5"/>
</dbReference>
<dbReference type="SMR" id="Q74C82"/>
<dbReference type="FunCoup" id="Q74C82">
    <property type="interactions" value="478"/>
</dbReference>
<dbReference type="STRING" id="243231.GSU1792"/>
<dbReference type="MEROPS" id="S14.001"/>
<dbReference type="EnsemblBacteria" id="AAR35169">
    <property type="protein sequence ID" value="AAR35169"/>
    <property type="gene ID" value="GSU1792"/>
</dbReference>
<dbReference type="KEGG" id="gsu:GSU1792"/>
<dbReference type="PATRIC" id="fig|243231.5.peg.1830"/>
<dbReference type="eggNOG" id="COG0740">
    <property type="taxonomic scope" value="Bacteria"/>
</dbReference>
<dbReference type="HOGENOM" id="CLU_058707_3_2_7"/>
<dbReference type="InParanoid" id="Q74C82"/>
<dbReference type="OrthoDB" id="9802800at2"/>
<dbReference type="Proteomes" id="UP000000577">
    <property type="component" value="Chromosome"/>
</dbReference>
<dbReference type="GO" id="GO:0005737">
    <property type="term" value="C:cytoplasm"/>
    <property type="evidence" value="ECO:0007669"/>
    <property type="project" value="UniProtKB-SubCell"/>
</dbReference>
<dbReference type="GO" id="GO:0009368">
    <property type="term" value="C:endopeptidase Clp complex"/>
    <property type="evidence" value="ECO:0000318"/>
    <property type="project" value="GO_Central"/>
</dbReference>
<dbReference type="GO" id="GO:0004176">
    <property type="term" value="F:ATP-dependent peptidase activity"/>
    <property type="evidence" value="ECO:0000318"/>
    <property type="project" value="GO_Central"/>
</dbReference>
<dbReference type="GO" id="GO:0051117">
    <property type="term" value="F:ATPase binding"/>
    <property type="evidence" value="ECO:0000318"/>
    <property type="project" value="GO_Central"/>
</dbReference>
<dbReference type="GO" id="GO:0004252">
    <property type="term" value="F:serine-type endopeptidase activity"/>
    <property type="evidence" value="ECO:0000318"/>
    <property type="project" value="GO_Central"/>
</dbReference>
<dbReference type="GO" id="GO:0006515">
    <property type="term" value="P:protein quality control for misfolded or incompletely synthesized proteins"/>
    <property type="evidence" value="ECO:0000318"/>
    <property type="project" value="GO_Central"/>
</dbReference>
<dbReference type="CDD" id="cd07017">
    <property type="entry name" value="S14_ClpP_2"/>
    <property type="match status" value="1"/>
</dbReference>
<dbReference type="FunFam" id="3.90.226.10:FF:000001">
    <property type="entry name" value="ATP-dependent Clp protease proteolytic subunit"/>
    <property type="match status" value="1"/>
</dbReference>
<dbReference type="Gene3D" id="3.90.226.10">
    <property type="entry name" value="2-enoyl-CoA Hydratase, Chain A, domain 1"/>
    <property type="match status" value="1"/>
</dbReference>
<dbReference type="HAMAP" id="MF_00444">
    <property type="entry name" value="ClpP"/>
    <property type="match status" value="1"/>
</dbReference>
<dbReference type="InterPro" id="IPR001907">
    <property type="entry name" value="ClpP"/>
</dbReference>
<dbReference type="InterPro" id="IPR029045">
    <property type="entry name" value="ClpP/crotonase-like_dom_sf"/>
</dbReference>
<dbReference type="InterPro" id="IPR023562">
    <property type="entry name" value="ClpP/TepA"/>
</dbReference>
<dbReference type="InterPro" id="IPR018215">
    <property type="entry name" value="ClpP_Ser_AS"/>
</dbReference>
<dbReference type="NCBIfam" id="TIGR00493">
    <property type="entry name" value="clpP"/>
    <property type="match status" value="1"/>
</dbReference>
<dbReference type="NCBIfam" id="NF001368">
    <property type="entry name" value="PRK00277.1"/>
    <property type="match status" value="1"/>
</dbReference>
<dbReference type="NCBIfam" id="NF009205">
    <property type="entry name" value="PRK12553.1"/>
    <property type="match status" value="1"/>
</dbReference>
<dbReference type="PANTHER" id="PTHR10381">
    <property type="entry name" value="ATP-DEPENDENT CLP PROTEASE PROTEOLYTIC SUBUNIT"/>
    <property type="match status" value="1"/>
</dbReference>
<dbReference type="PANTHER" id="PTHR10381:SF70">
    <property type="entry name" value="ATP-DEPENDENT CLP PROTEASE PROTEOLYTIC SUBUNIT"/>
    <property type="match status" value="1"/>
</dbReference>
<dbReference type="Pfam" id="PF00574">
    <property type="entry name" value="CLP_protease"/>
    <property type="match status" value="1"/>
</dbReference>
<dbReference type="PRINTS" id="PR00127">
    <property type="entry name" value="CLPPROTEASEP"/>
</dbReference>
<dbReference type="SUPFAM" id="SSF52096">
    <property type="entry name" value="ClpP/crotonase"/>
    <property type="match status" value="1"/>
</dbReference>
<dbReference type="PROSITE" id="PS00381">
    <property type="entry name" value="CLP_PROTEASE_SER"/>
    <property type="match status" value="1"/>
</dbReference>
<sequence length="199" mass="21869">MLVPIVVEQTGRGERSYDIYSRLLKDRIIFLGGPVDDHVANLVIAQMLFLEAEDPDKDIHLYINSPGGVVTSGMAIYDTMQYIKAPVSTICVGQAASMGALLLSGGEKGKRFSLKHSRIMIHQPLGGFQGQATDIHIHAQEILKLKKRLNEILAENTGQQLAKVEADTERDYFMSGAEAKDYGIIDNIIERNTPSGGTR</sequence>
<protein>
    <recommendedName>
        <fullName evidence="1">ATP-dependent Clp protease proteolytic subunit</fullName>
        <ecNumber evidence="1">3.4.21.92</ecNumber>
    </recommendedName>
    <alternativeName>
        <fullName evidence="1">Endopeptidase Clp</fullName>
    </alternativeName>
</protein>
<reference key="1">
    <citation type="journal article" date="2003" name="Science">
        <title>Genome of Geobacter sulfurreducens: metal reduction in subsurface environments.</title>
        <authorList>
            <person name="Methe B.A."/>
            <person name="Nelson K.E."/>
            <person name="Eisen J.A."/>
            <person name="Paulsen I.T."/>
            <person name="Nelson W.C."/>
            <person name="Heidelberg J.F."/>
            <person name="Wu D."/>
            <person name="Wu M."/>
            <person name="Ward N.L."/>
            <person name="Beanan M.J."/>
            <person name="Dodson R.J."/>
            <person name="Madupu R."/>
            <person name="Brinkac L.M."/>
            <person name="Daugherty S.C."/>
            <person name="DeBoy R.T."/>
            <person name="Durkin A.S."/>
            <person name="Gwinn M.L."/>
            <person name="Kolonay J.F."/>
            <person name="Sullivan S.A."/>
            <person name="Haft D.H."/>
            <person name="Selengut J."/>
            <person name="Davidsen T.M."/>
            <person name="Zafar N."/>
            <person name="White O."/>
            <person name="Tran B."/>
            <person name="Romero C."/>
            <person name="Forberger H.A."/>
            <person name="Weidman J.F."/>
            <person name="Khouri H.M."/>
            <person name="Feldblyum T.V."/>
            <person name="Utterback T.R."/>
            <person name="Van Aken S.E."/>
            <person name="Lovley D.R."/>
            <person name="Fraser C.M."/>
        </authorList>
    </citation>
    <scope>NUCLEOTIDE SEQUENCE [LARGE SCALE GENOMIC DNA]</scope>
    <source>
        <strain>ATCC 51573 / DSM 12127 / PCA</strain>
    </source>
</reference>
<evidence type="ECO:0000255" key="1">
    <source>
        <dbReference type="HAMAP-Rule" id="MF_00444"/>
    </source>
</evidence>
<name>CLPP_GEOSL</name>
<comment type="function">
    <text evidence="1">Cleaves peptides in various proteins in a process that requires ATP hydrolysis. Has a chymotrypsin-like activity. Plays a major role in the degradation of misfolded proteins.</text>
</comment>
<comment type="catalytic activity">
    <reaction evidence="1">
        <text>Hydrolysis of proteins to small peptides in the presence of ATP and magnesium. alpha-casein is the usual test substrate. In the absence of ATP, only oligopeptides shorter than five residues are hydrolyzed (such as succinyl-Leu-Tyr-|-NHMec, and Leu-Tyr-Leu-|-Tyr-Trp, in which cleavage of the -Tyr-|-Leu- and -Tyr-|-Trp bonds also occurs).</text>
        <dbReference type="EC" id="3.4.21.92"/>
    </reaction>
</comment>
<comment type="subunit">
    <text evidence="1">Fourteen ClpP subunits assemble into 2 heptameric rings which stack back to back to give a disk-like structure with a central cavity, resembling the structure of eukaryotic proteasomes.</text>
</comment>
<comment type="subcellular location">
    <subcellularLocation>
        <location evidence="1">Cytoplasm</location>
    </subcellularLocation>
</comment>
<comment type="similarity">
    <text evidence="1">Belongs to the peptidase S14 family.</text>
</comment>
<proteinExistence type="inferred from homology"/>
<keyword id="KW-0963">Cytoplasm</keyword>
<keyword id="KW-0378">Hydrolase</keyword>
<keyword id="KW-0645">Protease</keyword>
<keyword id="KW-1185">Reference proteome</keyword>
<keyword id="KW-0720">Serine protease</keyword>
<gene>
    <name evidence="1" type="primary">clpP</name>
    <name type="ordered locus">GSU1792</name>
</gene>
<organism>
    <name type="scientific">Geobacter sulfurreducens (strain ATCC 51573 / DSM 12127 / PCA)</name>
    <dbReference type="NCBI Taxonomy" id="243231"/>
    <lineage>
        <taxon>Bacteria</taxon>
        <taxon>Pseudomonadati</taxon>
        <taxon>Thermodesulfobacteriota</taxon>
        <taxon>Desulfuromonadia</taxon>
        <taxon>Geobacterales</taxon>
        <taxon>Geobacteraceae</taxon>
        <taxon>Geobacter</taxon>
    </lineage>
</organism>
<feature type="chain" id="PRO_0000179561" description="ATP-dependent Clp protease proteolytic subunit">
    <location>
        <begin position="1"/>
        <end position="199"/>
    </location>
</feature>
<feature type="active site" description="Nucleophile" evidence="1">
    <location>
        <position position="97"/>
    </location>
</feature>
<feature type="active site" evidence="1">
    <location>
        <position position="122"/>
    </location>
</feature>